<accession>P81232</accession>
<organism>
    <name type="scientific">Methanocaldococcus jannaschii (strain ATCC 43067 / DSM 2661 / JAL-1 / JCM 10045 / NBRC 100440)</name>
    <name type="common">Methanococcus jannaschii</name>
    <dbReference type="NCBI Taxonomy" id="243232"/>
    <lineage>
        <taxon>Archaea</taxon>
        <taxon>Methanobacteriati</taxon>
        <taxon>Methanobacteriota</taxon>
        <taxon>Methanomada group</taxon>
        <taxon>Methanococci</taxon>
        <taxon>Methanococcales</taxon>
        <taxon>Methanocaldococcaceae</taxon>
        <taxon>Methanocaldococcus</taxon>
    </lineage>
</organism>
<dbReference type="EMBL" id="L77117">
    <property type="protein sequence ID" value="AAB98206.1"/>
    <property type="molecule type" value="Genomic_DNA"/>
</dbReference>
<dbReference type="FunCoup" id="P81232">
    <property type="interactions" value="89"/>
</dbReference>
<dbReference type="STRING" id="243232.MJ_0210.1"/>
<dbReference type="PaxDb" id="243232-MJ_0210.1"/>
<dbReference type="DNASU" id="1451060"/>
<dbReference type="EnsemblBacteria" id="AAB98206">
    <property type="protein sequence ID" value="AAB98206"/>
    <property type="gene ID" value="MJ_0210.1"/>
</dbReference>
<dbReference type="KEGG" id="mja:MJ_0210.1"/>
<dbReference type="eggNOG" id="arCOG09658">
    <property type="taxonomic scope" value="Archaea"/>
</dbReference>
<dbReference type="HOGENOM" id="CLU_1582930_0_0_2"/>
<dbReference type="InParanoid" id="P81232"/>
<dbReference type="OrthoDB" id="380148at2157"/>
<dbReference type="PhylomeDB" id="P81232"/>
<dbReference type="Proteomes" id="UP000000805">
    <property type="component" value="Chromosome"/>
</dbReference>
<dbReference type="GO" id="GO:0005886">
    <property type="term" value="C:plasma membrane"/>
    <property type="evidence" value="ECO:0007669"/>
    <property type="project" value="UniProtKB-SubCell"/>
</dbReference>
<reference key="1">
    <citation type="journal article" date="1996" name="Science">
        <title>Complete genome sequence of the methanogenic archaeon, Methanococcus jannaschii.</title>
        <authorList>
            <person name="Bult C.J."/>
            <person name="White O."/>
            <person name="Olsen G.J."/>
            <person name="Zhou L."/>
            <person name="Fleischmann R.D."/>
            <person name="Sutton G.G."/>
            <person name="Blake J.A."/>
            <person name="FitzGerald L.M."/>
            <person name="Clayton R.A."/>
            <person name="Gocayne J.D."/>
            <person name="Kerlavage A.R."/>
            <person name="Dougherty B.A."/>
            <person name="Tomb J.-F."/>
            <person name="Adams M.D."/>
            <person name="Reich C.I."/>
            <person name="Overbeek R."/>
            <person name="Kirkness E.F."/>
            <person name="Weinstock K.G."/>
            <person name="Merrick J.M."/>
            <person name="Glodek A."/>
            <person name="Scott J.L."/>
            <person name="Geoghagen N.S.M."/>
            <person name="Weidman J.F."/>
            <person name="Fuhrmann J.L."/>
            <person name="Nguyen D."/>
            <person name="Utterback T.R."/>
            <person name="Kelley J.M."/>
            <person name="Peterson J.D."/>
            <person name="Sadow P.W."/>
            <person name="Hanna M.C."/>
            <person name="Cotton M.D."/>
            <person name="Roberts K.M."/>
            <person name="Hurst M.A."/>
            <person name="Kaine B.P."/>
            <person name="Borodovsky M."/>
            <person name="Klenk H.-P."/>
            <person name="Fraser C.M."/>
            <person name="Smith H.O."/>
            <person name="Woese C.R."/>
            <person name="Venter J.C."/>
        </authorList>
    </citation>
    <scope>NUCLEOTIDE SEQUENCE [LARGE SCALE GENOMIC DNA]</scope>
    <source>
        <strain>ATCC 43067 / DSM 2661 / JAL-1 / JCM 10045 / NBRC 100440</strain>
    </source>
</reference>
<keyword id="KW-1003">Cell membrane</keyword>
<keyword id="KW-0472">Membrane</keyword>
<keyword id="KW-1185">Reference proteome</keyword>
<keyword id="KW-0812">Transmembrane</keyword>
<keyword id="KW-1133">Transmembrane helix</keyword>
<protein>
    <recommendedName>
        <fullName>Uncharacterized protein MJ0210.1</fullName>
    </recommendedName>
</protein>
<sequence length="172" mass="20084">MFNKVAFMNIPMMDLIMIVIAIIITIGSFLFIAYLIFKYSKIKKQVKIIREVKINLPKMLKSNMIKNSFLIISLLCFYFGMLYIAGELVISHILFIAICWIVVFLYIIIKGETRGYICEEGLLVSGVLYSWKEFKDVKIEDNYIILTTPIHKIVIKKEKGVENILKNYLKRN</sequence>
<gene>
    <name type="ordered locus">MJ0210.1</name>
</gene>
<comment type="subcellular location">
    <subcellularLocation>
        <location evidence="2">Cell membrane</location>
        <topology evidence="2">Multi-pass membrane protein</topology>
    </subcellularLocation>
</comment>
<proteinExistence type="predicted"/>
<feature type="chain" id="PRO_0000106743" description="Uncharacterized protein MJ0210.1">
    <location>
        <begin position="1"/>
        <end position="172"/>
    </location>
</feature>
<feature type="transmembrane region" description="Helical" evidence="1">
    <location>
        <begin position="16"/>
        <end position="36"/>
    </location>
</feature>
<feature type="transmembrane region" description="Helical" evidence="1">
    <location>
        <begin position="68"/>
        <end position="88"/>
    </location>
</feature>
<feature type="transmembrane region" description="Helical" evidence="1">
    <location>
        <begin position="89"/>
        <end position="109"/>
    </location>
</feature>
<name>Y21B_METJA</name>
<evidence type="ECO:0000255" key="1"/>
<evidence type="ECO:0000305" key="2"/>